<dbReference type="EC" id="1.2.1.70" evidence="1"/>
<dbReference type="EMBL" id="CP000036">
    <property type="protein sequence ID" value="ABB66455.1"/>
    <property type="molecule type" value="Genomic_DNA"/>
</dbReference>
<dbReference type="RefSeq" id="WP_000173200.1">
    <property type="nucleotide sequence ID" value="NC_007613.1"/>
</dbReference>
<dbReference type="SMR" id="Q31ZQ3"/>
<dbReference type="GeneID" id="93775275"/>
<dbReference type="KEGG" id="sbo:SBO_1857"/>
<dbReference type="HOGENOM" id="CLU_035113_2_2_6"/>
<dbReference type="UniPathway" id="UPA00251">
    <property type="reaction ID" value="UER00316"/>
</dbReference>
<dbReference type="Proteomes" id="UP000007067">
    <property type="component" value="Chromosome"/>
</dbReference>
<dbReference type="GO" id="GO:0008883">
    <property type="term" value="F:glutamyl-tRNA reductase activity"/>
    <property type="evidence" value="ECO:0007669"/>
    <property type="project" value="UniProtKB-UniRule"/>
</dbReference>
<dbReference type="GO" id="GO:0050661">
    <property type="term" value="F:NADP binding"/>
    <property type="evidence" value="ECO:0007669"/>
    <property type="project" value="InterPro"/>
</dbReference>
<dbReference type="GO" id="GO:0019353">
    <property type="term" value="P:protoporphyrinogen IX biosynthetic process from glutamate"/>
    <property type="evidence" value="ECO:0007669"/>
    <property type="project" value="TreeGrafter"/>
</dbReference>
<dbReference type="CDD" id="cd05213">
    <property type="entry name" value="NAD_bind_Glutamyl_tRNA_reduct"/>
    <property type="match status" value="1"/>
</dbReference>
<dbReference type="FunFam" id="3.30.460.30:FF:000001">
    <property type="entry name" value="Glutamyl-tRNA reductase"/>
    <property type="match status" value="1"/>
</dbReference>
<dbReference type="FunFam" id="3.40.50.720:FF:000031">
    <property type="entry name" value="Glutamyl-tRNA reductase"/>
    <property type="match status" value="1"/>
</dbReference>
<dbReference type="Gene3D" id="3.30.460.30">
    <property type="entry name" value="Glutamyl-tRNA reductase, N-terminal domain"/>
    <property type="match status" value="1"/>
</dbReference>
<dbReference type="Gene3D" id="3.40.50.720">
    <property type="entry name" value="NAD(P)-binding Rossmann-like Domain"/>
    <property type="match status" value="1"/>
</dbReference>
<dbReference type="HAMAP" id="MF_00087">
    <property type="entry name" value="Glu_tRNA_reductase"/>
    <property type="match status" value="1"/>
</dbReference>
<dbReference type="InterPro" id="IPR000343">
    <property type="entry name" value="4pyrrol_synth_GluRdtase"/>
</dbReference>
<dbReference type="InterPro" id="IPR015896">
    <property type="entry name" value="4pyrrol_synth_GluRdtase_dimer"/>
</dbReference>
<dbReference type="InterPro" id="IPR015895">
    <property type="entry name" value="4pyrrol_synth_GluRdtase_N"/>
</dbReference>
<dbReference type="InterPro" id="IPR018214">
    <property type="entry name" value="GluRdtase_CS"/>
</dbReference>
<dbReference type="InterPro" id="IPR036453">
    <property type="entry name" value="GluRdtase_dimer_dom_sf"/>
</dbReference>
<dbReference type="InterPro" id="IPR036343">
    <property type="entry name" value="GluRdtase_N_sf"/>
</dbReference>
<dbReference type="InterPro" id="IPR036291">
    <property type="entry name" value="NAD(P)-bd_dom_sf"/>
</dbReference>
<dbReference type="InterPro" id="IPR006151">
    <property type="entry name" value="Shikm_DH/Glu-tRNA_Rdtase"/>
</dbReference>
<dbReference type="NCBIfam" id="TIGR01035">
    <property type="entry name" value="hemA"/>
    <property type="match status" value="1"/>
</dbReference>
<dbReference type="PANTHER" id="PTHR43013">
    <property type="entry name" value="GLUTAMYL-TRNA REDUCTASE"/>
    <property type="match status" value="1"/>
</dbReference>
<dbReference type="PANTHER" id="PTHR43013:SF1">
    <property type="entry name" value="GLUTAMYL-TRNA REDUCTASE"/>
    <property type="match status" value="1"/>
</dbReference>
<dbReference type="Pfam" id="PF00745">
    <property type="entry name" value="GlutR_dimer"/>
    <property type="match status" value="1"/>
</dbReference>
<dbReference type="Pfam" id="PF05201">
    <property type="entry name" value="GlutR_N"/>
    <property type="match status" value="1"/>
</dbReference>
<dbReference type="Pfam" id="PF01488">
    <property type="entry name" value="Shikimate_DH"/>
    <property type="match status" value="1"/>
</dbReference>
<dbReference type="PIRSF" id="PIRSF000445">
    <property type="entry name" value="4pyrrol_synth_GluRdtase"/>
    <property type="match status" value="1"/>
</dbReference>
<dbReference type="SUPFAM" id="SSF69742">
    <property type="entry name" value="Glutamyl tRNA-reductase catalytic, N-terminal domain"/>
    <property type="match status" value="1"/>
</dbReference>
<dbReference type="SUPFAM" id="SSF69075">
    <property type="entry name" value="Glutamyl tRNA-reductase dimerization domain"/>
    <property type="match status" value="1"/>
</dbReference>
<dbReference type="SUPFAM" id="SSF51735">
    <property type="entry name" value="NAD(P)-binding Rossmann-fold domains"/>
    <property type="match status" value="1"/>
</dbReference>
<dbReference type="PROSITE" id="PS00747">
    <property type="entry name" value="GLUTR"/>
    <property type="match status" value="1"/>
</dbReference>
<feature type="chain" id="PRO_1000004696" description="Glutamyl-tRNA reductase">
    <location>
        <begin position="1"/>
        <end position="418"/>
    </location>
</feature>
<feature type="active site" description="Nucleophile" evidence="1">
    <location>
        <position position="50"/>
    </location>
</feature>
<feature type="binding site" evidence="1">
    <location>
        <begin position="49"/>
        <end position="52"/>
    </location>
    <ligand>
        <name>substrate</name>
    </ligand>
</feature>
<feature type="binding site" evidence="1">
    <location>
        <position position="109"/>
    </location>
    <ligand>
        <name>substrate</name>
    </ligand>
</feature>
<feature type="binding site" evidence="1">
    <location>
        <begin position="114"/>
        <end position="116"/>
    </location>
    <ligand>
        <name>substrate</name>
    </ligand>
</feature>
<feature type="binding site" evidence="1">
    <location>
        <position position="120"/>
    </location>
    <ligand>
        <name>substrate</name>
    </ligand>
</feature>
<feature type="binding site" evidence="1">
    <location>
        <begin position="189"/>
        <end position="194"/>
    </location>
    <ligand>
        <name>NADP(+)</name>
        <dbReference type="ChEBI" id="CHEBI:58349"/>
    </ligand>
</feature>
<feature type="site" description="Important for activity" evidence="1">
    <location>
        <position position="99"/>
    </location>
</feature>
<comment type="function">
    <text evidence="1">Catalyzes the NADPH-dependent reduction of glutamyl-tRNA(Glu) to glutamate 1-semialdehyde (GSA).</text>
</comment>
<comment type="catalytic activity">
    <reaction evidence="1">
        <text>(S)-4-amino-5-oxopentanoate + tRNA(Glu) + NADP(+) = L-glutamyl-tRNA(Glu) + NADPH + H(+)</text>
        <dbReference type="Rhea" id="RHEA:12344"/>
        <dbReference type="Rhea" id="RHEA-COMP:9663"/>
        <dbReference type="Rhea" id="RHEA-COMP:9680"/>
        <dbReference type="ChEBI" id="CHEBI:15378"/>
        <dbReference type="ChEBI" id="CHEBI:57501"/>
        <dbReference type="ChEBI" id="CHEBI:57783"/>
        <dbReference type="ChEBI" id="CHEBI:58349"/>
        <dbReference type="ChEBI" id="CHEBI:78442"/>
        <dbReference type="ChEBI" id="CHEBI:78520"/>
        <dbReference type="EC" id="1.2.1.70"/>
    </reaction>
</comment>
<comment type="pathway">
    <text evidence="1">Porphyrin-containing compound metabolism; protoporphyrin-IX biosynthesis; 5-aminolevulinate from L-glutamyl-tRNA(Glu): step 1/2.</text>
</comment>
<comment type="subunit">
    <text evidence="1">Homodimer.</text>
</comment>
<comment type="domain">
    <text evidence="1">Possesses an unusual extended V-shaped dimeric structure with each monomer consisting of three distinct domains arranged along a curved 'spinal' alpha-helix. The N-terminal catalytic domain specifically recognizes the glutamate moiety of the substrate. The second domain is the NADPH-binding domain, and the third C-terminal domain is responsible for dimerization.</text>
</comment>
<comment type="miscellaneous">
    <text evidence="1">During catalysis, the active site Cys acts as a nucleophile attacking the alpha-carbonyl group of tRNA-bound glutamate with the formation of a thioester intermediate between enzyme and glutamate, and the concomitant release of tRNA(Glu). The thioester intermediate is finally reduced by direct hydride transfer from NADPH, to form the product GSA.</text>
</comment>
<comment type="similarity">
    <text evidence="1">Belongs to the glutamyl-tRNA reductase family.</text>
</comment>
<name>HEM1_SHIBS</name>
<evidence type="ECO:0000255" key="1">
    <source>
        <dbReference type="HAMAP-Rule" id="MF_00087"/>
    </source>
</evidence>
<organism>
    <name type="scientific">Shigella boydii serotype 4 (strain Sb227)</name>
    <dbReference type="NCBI Taxonomy" id="300268"/>
    <lineage>
        <taxon>Bacteria</taxon>
        <taxon>Pseudomonadati</taxon>
        <taxon>Pseudomonadota</taxon>
        <taxon>Gammaproteobacteria</taxon>
        <taxon>Enterobacterales</taxon>
        <taxon>Enterobacteriaceae</taxon>
        <taxon>Shigella</taxon>
    </lineage>
</organism>
<protein>
    <recommendedName>
        <fullName evidence="1">Glutamyl-tRNA reductase</fullName>
        <shortName evidence="1">GluTR</shortName>
        <ecNumber evidence="1">1.2.1.70</ecNumber>
    </recommendedName>
</protein>
<keyword id="KW-0521">NADP</keyword>
<keyword id="KW-0560">Oxidoreductase</keyword>
<keyword id="KW-0627">Porphyrin biosynthesis</keyword>
<accession>Q31ZQ3</accession>
<sequence length="418" mass="46330">MTLLALGINHKTAPVSLRERVSFSPDKLDQALDSLLAQPMVQGGVVLSTCNRTELYLSVEEQDNLQEALIRWLCDYHNLNEEDLRKSLYWHQDNDAVSHLMRVASGLDSLVLGEPQILGQVKKAFADSQKGHMKASELERMFQKSFSVAKRVRTETDIGASAVSVAFAACTLARQIFESLSTVTVLLVGAGETIELVARHLREHKVQKMIIANRTRERAQILADEVGAEVIALSEIDERLREADIIISSTASPLPIIGKGMVERALKSRRNQPMLLVDIAVPRDVEPEVGKLANAYLYSVDDLQSIISHNLAQRKAAAVEAETIVAQETSEFMAWLRAQSASETIREYRSQAEHVRDELTAKALAALEQGGDAQAIMQDLAWKLTNRLIHAPTKSLQQAARDGDNERLNILRDSLGLE</sequence>
<reference key="1">
    <citation type="journal article" date="2005" name="Nucleic Acids Res.">
        <title>Genome dynamics and diversity of Shigella species, the etiologic agents of bacillary dysentery.</title>
        <authorList>
            <person name="Yang F."/>
            <person name="Yang J."/>
            <person name="Zhang X."/>
            <person name="Chen L."/>
            <person name="Jiang Y."/>
            <person name="Yan Y."/>
            <person name="Tang X."/>
            <person name="Wang J."/>
            <person name="Xiong Z."/>
            <person name="Dong J."/>
            <person name="Xue Y."/>
            <person name="Zhu Y."/>
            <person name="Xu X."/>
            <person name="Sun L."/>
            <person name="Chen S."/>
            <person name="Nie H."/>
            <person name="Peng J."/>
            <person name="Xu J."/>
            <person name="Wang Y."/>
            <person name="Yuan Z."/>
            <person name="Wen Y."/>
            <person name="Yao Z."/>
            <person name="Shen Y."/>
            <person name="Qiang B."/>
            <person name="Hou Y."/>
            <person name="Yu J."/>
            <person name="Jin Q."/>
        </authorList>
    </citation>
    <scope>NUCLEOTIDE SEQUENCE [LARGE SCALE GENOMIC DNA]</scope>
    <source>
        <strain>Sb227</strain>
    </source>
</reference>
<proteinExistence type="inferred from homology"/>
<gene>
    <name evidence="1" type="primary">hemA</name>
    <name type="ordered locus">SBO_1857</name>
</gene>